<dbReference type="EC" id="2.1.1.222" evidence="1"/>
<dbReference type="EC" id="2.1.1.64" evidence="1"/>
<dbReference type="EMBL" id="CU928163">
    <property type="protein sequence ID" value="CAR13753.1"/>
    <property type="molecule type" value="Genomic_DNA"/>
</dbReference>
<dbReference type="RefSeq" id="WP_000990765.1">
    <property type="nucleotide sequence ID" value="NC_011751.1"/>
</dbReference>
<dbReference type="RefSeq" id="YP_002413281.1">
    <property type="nucleotide sequence ID" value="NC_011751.1"/>
</dbReference>
<dbReference type="SMR" id="B7N5J4"/>
<dbReference type="STRING" id="585056.ECUMN_2569"/>
<dbReference type="GeneID" id="75206477"/>
<dbReference type="KEGG" id="eum:ECUMN_2569"/>
<dbReference type="PATRIC" id="fig|585056.7.peg.2749"/>
<dbReference type="HOGENOM" id="CLU_042432_5_0_6"/>
<dbReference type="UniPathway" id="UPA00232"/>
<dbReference type="Proteomes" id="UP000007097">
    <property type="component" value="Chromosome"/>
</dbReference>
<dbReference type="GO" id="GO:0102208">
    <property type="term" value="F:2-polyprenyl-6-hydroxyphenol methylase activity"/>
    <property type="evidence" value="ECO:0007669"/>
    <property type="project" value="UniProtKB-EC"/>
</dbReference>
<dbReference type="GO" id="GO:0061542">
    <property type="term" value="F:3-demethylubiquinol 3-O-methyltransferase activity"/>
    <property type="evidence" value="ECO:0007669"/>
    <property type="project" value="UniProtKB-UniRule"/>
</dbReference>
<dbReference type="GO" id="GO:0010420">
    <property type="term" value="F:polyprenyldihydroxybenzoate methyltransferase activity"/>
    <property type="evidence" value="ECO:0007669"/>
    <property type="project" value="InterPro"/>
</dbReference>
<dbReference type="GO" id="GO:0032259">
    <property type="term" value="P:methylation"/>
    <property type="evidence" value="ECO:0007669"/>
    <property type="project" value="UniProtKB-KW"/>
</dbReference>
<dbReference type="CDD" id="cd02440">
    <property type="entry name" value="AdoMet_MTases"/>
    <property type="match status" value="1"/>
</dbReference>
<dbReference type="FunFam" id="3.40.50.150:FF:000028">
    <property type="entry name" value="Ubiquinone biosynthesis O-methyltransferase"/>
    <property type="match status" value="1"/>
</dbReference>
<dbReference type="Gene3D" id="3.40.50.150">
    <property type="entry name" value="Vaccinia Virus protein VP39"/>
    <property type="match status" value="1"/>
</dbReference>
<dbReference type="HAMAP" id="MF_00472">
    <property type="entry name" value="UbiG"/>
    <property type="match status" value="1"/>
</dbReference>
<dbReference type="InterPro" id="IPR029063">
    <property type="entry name" value="SAM-dependent_MTases_sf"/>
</dbReference>
<dbReference type="InterPro" id="IPR010233">
    <property type="entry name" value="UbiG_MeTrfase"/>
</dbReference>
<dbReference type="NCBIfam" id="TIGR01983">
    <property type="entry name" value="UbiG"/>
    <property type="match status" value="1"/>
</dbReference>
<dbReference type="PANTHER" id="PTHR43464">
    <property type="entry name" value="METHYLTRANSFERASE"/>
    <property type="match status" value="1"/>
</dbReference>
<dbReference type="PANTHER" id="PTHR43464:SF19">
    <property type="entry name" value="UBIQUINONE BIOSYNTHESIS O-METHYLTRANSFERASE, MITOCHONDRIAL"/>
    <property type="match status" value="1"/>
</dbReference>
<dbReference type="Pfam" id="PF13489">
    <property type="entry name" value="Methyltransf_23"/>
    <property type="match status" value="1"/>
</dbReference>
<dbReference type="SUPFAM" id="SSF53335">
    <property type="entry name" value="S-adenosyl-L-methionine-dependent methyltransferases"/>
    <property type="match status" value="1"/>
</dbReference>
<proteinExistence type="inferred from homology"/>
<accession>B7N5J4</accession>
<sequence length="240" mass="26555">MNAEKSPVNHNVDHEEIAKFEAVASRWWDLEGEFKPLHRINPLRLGYIAERAGGLFGKKVLDVGCGGGILAESMAREGATVTGLDMGFEPLQVAKLHALESGIQVDYVQETVEEHAAKHAGQYDVVTCMEMLEHVPDPQSVVRACAQLVKPGGDVFFSTLNRNGKSWLMAVVGAEYILRMVPKGTHDVKKFIKPAELLGWVDQTSLKERHITGLHYNPITNTFKLGPGVDVNYMLHTQNK</sequence>
<organism>
    <name type="scientific">Escherichia coli O17:K52:H18 (strain UMN026 / ExPEC)</name>
    <dbReference type="NCBI Taxonomy" id="585056"/>
    <lineage>
        <taxon>Bacteria</taxon>
        <taxon>Pseudomonadati</taxon>
        <taxon>Pseudomonadota</taxon>
        <taxon>Gammaproteobacteria</taxon>
        <taxon>Enterobacterales</taxon>
        <taxon>Enterobacteriaceae</taxon>
        <taxon>Escherichia</taxon>
    </lineage>
</organism>
<reference key="1">
    <citation type="journal article" date="2009" name="PLoS Genet.">
        <title>Organised genome dynamics in the Escherichia coli species results in highly diverse adaptive paths.</title>
        <authorList>
            <person name="Touchon M."/>
            <person name="Hoede C."/>
            <person name="Tenaillon O."/>
            <person name="Barbe V."/>
            <person name="Baeriswyl S."/>
            <person name="Bidet P."/>
            <person name="Bingen E."/>
            <person name="Bonacorsi S."/>
            <person name="Bouchier C."/>
            <person name="Bouvet O."/>
            <person name="Calteau A."/>
            <person name="Chiapello H."/>
            <person name="Clermont O."/>
            <person name="Cruveiller S."/>
            <person name="Danchin A."/>
            <person name="Diard M."/>
            <person name="Dossat C."/>
            <person name="Karoui M.E."/>
            <person name="Frapy E."/>
            <person name="Garry L."/>
            <person name="Ghigo J.M."/>
            <person name="Gilles A.M."/>
            <person name="Johnson J."/>
            <person name="Le Bouguenec C."/>
            <person name="Lescat M."/>
            <person name="Mangenot S."/>
            <person name="Martinez-Jehanne V."/>
            <person name="Matic I."/>
            <person name="Nassif X."/>
            <person name="Oztas S."/>
            <person name="Petit M.A."/>
            <person name="Pichon C."/>
            <person name="Rouy Z."/>
            <person name="Ruf C.S."/>
            <person name="Schneider D."/>
            <person name="Tourret J."/>
            <person name="Vacherie B."/>
            <person name="Vallenet D."/>
            <person name="Medigue C."/>
            <person name="Rocha E.P.C."/>
            <person name="Denamur E."/>
        </authorList>
    </citation>
    <scope>NUCLEOTIDE SEQUENCE [LARGE SCALE GENOMIC DNA]</scope>
    <source>
        <strain>UMN026 / ExPEC</strain>
    </source>
</reference>
<comment type="function">
    <text evidence="1">O-methyltransferase that catalyzes the 2 O-methylation steps in the ubiquinone biosynthetic pathway.</text>
</comment>
<comment type="catalytic activity">
    <reaction evidence="1">
        <text>a 3-demethylubiquinol + S-adenosyl-L-methionine = a ubiquinol + S-adenosyl-L-homocysteine + H(+)</text>
        <dbReference type="Rhea" id="RHEA:44380"/>
        <dbReference type="Rhea" id="RHEA-COMP:9566"/>
        <dbReference type="Rhea" id="RHEA-COMP:10914"/>
        <dbReference type="ChEBI" id="CHEBI:15378"/>
        <dbReference type="ChEBI" id="CHEBI:17976"/>
        <dbReference type="ChEBI" id="CHEBI:57856"/>
        <dbReference type="ChEBI" id="CHEBI:59789"/>
        <dbReference type="ChEBI" id="CHEBI:84422"/>
        <dbReference type="EC" id="2.1.1.64"/>
    </reaction>
</comment>
<comment type="catalytic activity">
    <reaction evidence="1">
        <text>a 3-(all-trans-polyprenyl)benzene-1,2-diol + S-adenosyl-L-methionine = a 2-methoxy-6-(all-trans-polyprenyl)phenol + S-adenosyl-L-homocysteine + H(+)</text>
        <dbReference type="Rhea" id="RHEA:31411"/>
        <dbReference type="Rhea" id="RHEA-COMP:9550"/>
        <dbReference type="Rhea" id="RHEA-COMP:9551"/>
        <dbReference type="ChEBI" id="CHEBI:15378"/>
        <dbReference type="ChEBI" id="CHEBI:57856"/>
        <dbReference type="ChEBI" id="CHEBI:59789"/>
        <dbReference type="ChEBI" id="CHEBI:62729"/>
        <dbReference type="ChEBI" id="CHEBI:62731"/>
        <dbReference type="EC" id="2.1.1.222"/>
    </reaction>
</comment>
<comment type="pathway">
    <text evidence="1">Cofactor biosynthesis; ubiquinone biosynthesis.</text>
</comment>
<comment type="similarity">
    <text evidence="1">Belongs to the methyltransferase superfamily. UbiG/COQ3 family.</text>
</comment>
<keyword id="KW-0489">Methyltransferase</keyword>
<keyword id="KW-0949">S-adenosyl-L-methionine</keyword>
<keyword id="KW-0808">Transferase</keyword>
<keyword id="KW-0831">Ubiquinone biosynthesis</keyword>
<gene>
    <name evidence="1" type="primary">ubiG</name>
    <name type="ordered locus">ECUMN_2569</name>
</gene>
<evidence type="ECO:0000255" key="1">
    <source>
        <dbReference type="HAMAP-Rule" id="MF_00472"/>
    </source>
</evidence>
<feature type="chain" id="PRO_1000199682" description="Ubiquinone biosynthesis O-methyltransferase">
    <location>
        <begin position="1"/>
        <end position="240"/>
    </location>
</feature>
<feature type="binding site" evidence="1">
    <location>
        <position position="44"/>
    </location>
    <ligand>
        <name>S-adenosyl-L-methionine</name>
        <dbReference type="ChEBI" id="CHEBI:59789"/>
    </ligand>
</feature>
<feature type="binding site" evidence="1">
    <location>
        <position position="64"/>
    </location>
    <ligand>
        <name>S-adenosyl-L-methionine</name>
        <dbReference type="ChEBI" id="CHEBI:59789"/>
    </ligand>
</feature>
<feature type="binding site" evidence="1">
    <location>
        <position position="85"/>
    </location>
    <ligand>
        <name>S-adenosyl-L-methionine</name>
        <dbReference type="ChEBI" id="CHEBI:59789"/>
    </ligand>
</feature>
<feature type="binding site" evidence="1">
    <location>
        <position position="129"/>
    </location>
    <ligand>
        <name>S-adenosyl-L-methionine</name>
        <dbReference type="ChEBI" id="CHEBI:59789"/>
    </ligand>
</feature>
<name>UBIG_ECOLU</name>
<protein>
    <recommendedName>
        <fullName evidence="1">Ubiquinone biosynthesis O-methyltransferase</fullName>
    </recommendedName>
    <alternativeName>
        <fullName evidence="1">2-octaprenyl-6-hydroxyphenol methylase</fullName>
        <ecNumber evidence="1">2.1.1.222</ecNumber>
    </alternativeName>
    <alternativeName>
        <fullName evidence="1">3-demethylubiquinone-8 3-O-methyltransferase</fullName>
        <ecNumber evidence="1">2.1.1.64</ecNumber>
    </alternativeName>
</protein>